<reference key="1">
    <citation type="journal article" date="2005" name="Gene">
        <title>The first complete chloroplast genome sequence of a lycophyte, Huperzia lucidula (Lycopodiaceae).</title>
        <authorList>
            <person name="Wolf P.G."/>
            <person name="Karol K.G."/>
            <person name="Mandoli D.F."/>
            <person name="Kuehl J.V."/>
            <person name="Arumuganathan K."/>
            <person name="Ellis M.W."/>
            <person name="Mishler B.D."/>
            <person name="Kelch D.G."/>
            <person name="Olmstead R.G."/>
            <person name="Boore J.L."/>
        </authorList>
    </citation>
    <scope>NUCLEOTIDE SEQUENCE [LARGE SCALE GENOMIC DNA]</scope>
</reference>
<organism>
    <name type="scientific">Huperzia lucidula</name>
    <name type="common">Shining clubmoss</name>
    <name type="synonym">Lycopodium lucidulum</name>
    <dbReference type="NCBI Taxonomy" id="37429"/>
    <lineage>
        <taxon>Eukaryota</taxon>
        <taxon>Viridiplantae</taxon>
        <taxon>Streptophyta</taxon>
        <taxon>Embryophyta</taxon>
        <taxon>Tracheophyta</taxon>
        <taxon>Lycopodiopsida</taxon>
        <taxon>Lycopodiales</taxon>
        <taxon>Lycopodiaceae</taxon>
        <taxon>Huperzioideae</taxon>
        <taxon>Huperzia</taxon>
    </lineage>
</organism>
<geneLocation type="chloroplast"/>
<keyword id="KW-0050">Antiport</keyword>
<keyword id="KW-0150">Chloroplast</keyword>
<keyword id="KW-0375">Hydrogen ion transport</keyword>
<keyword id="KW-0406">Ion transport</keyword>
<keyword id="KW-0472">Membrane</keyword>
<keyword id="KW-0934">Plastid</keyword>
<keyword id="KW-1001">Plastid inner membrane</keyword>
<keyword id="KW-0630">Potassium</keyword>
<keyword id="KW-0633">Potassium transport</keyword>
<keyword id="KW-0812">Transmembrane</keyword>
<keyword id="KW-1133">Transmembrane helix</keyword>
<keyword id="KW-0813">Transport</keyword>
<dbReference type="EMBL" id="AY660566">
    <property type="protein sequence ID" value="AAT80713.1"/>
    <property type="molecule type" value="Genomic_DNA"/>
</dbReference>
<dbReference type="RefSeq" id="YP_209517.1">
    <property type="nucleotide sequence ID" value="NC_006861.1"/>
</dbReference>
<dbReference type="GeneID" id="3283785"/>
<dbReference type="GO" id="GO:0009706">
    <property type="term" value="C:chloroplast inner membrane"/>
    <property type="evidence" value="ECO:0007669"/>
    <property type="project" value="UniProtKB-SubCell"/>
</dbReference>
<dbReference type="GO" id="GO:0015297">
    <property type="term" value="F:antiporter activity"/>
    <property type="evidence" value="ECO:0007669"/>
    <property type="project" value="UniProtKB-KW"/>
</dbReference>
<dbReference type="GO" id="GO:0015078">
    <property type="term" value="F:proton transmembrane transporter activity"/>
    <property type="evidence" value="ECO:0007669"/>
    <property type="project" value="UniProtKB-UniRule"/>
</dbReference>
<dbReference type="GO" id="GO:0006813">
    <property type="term" value="P:potassium ion transport"/>
    <property type="evidence" value="ECO:0007669"/>
    <property type="project" value="UniProtKB-UniRule"/>
</dbReference>
<dbReference type="HAMAP" id="MF_01308">
    <property type="entry name" value="CemA_PxcA"/>
    <property type="match status" value="1"/>
</dbReference>
<dbReference type="InterPro" id="IPR004282">
    <property type="entry name" value="CemA"/>
</dbReference>
<dbReference type="PANTHER" id="PTHR33650:SF2">
    <property type="entry name" value="CHLOROPLAST ENVELOPE MEMBRANE PROTEIN"/>
    <property type="match status" value="1"/>
</dbReference>
<dbReference type="PANTHER" id="PTHR33650">
    <property type="entry name" value="CHLOROPLAST ENVELOPE MEMBRANE PROTEIN-RELATED"/>
    <property type="match status" value="1"/>
</dbReference>
<dbReference type="Pfam" id="PF03040">
    <property type="entry name" value="CemA"/>
    <property type="match status" value="1"/>
</dbReference>
<protein>
    <recommendedName>
        <fullName evidence="1">Potassium/proton antiporter CemA</fullName>
    </recommendedName>
    <alternativeName>
        <fullName evidence="1">Chloroplast envelope membrane protein A</fullName>
        <shortName evidence="1">CemA</shortName>
    </alternativeName>
</protein>
<evidence type="ECO:0000255" key="1">
    <source>
        <dbReference type="HAMAP-Rule" id="MF_01308"/>
    </source>
</evidence>
<evidence type="ECO:0000305" key="2"/>
<accession>Q5SD38</accession>
<comment type="function">
    <text evidence="1">Contributes to K(+)/H(+) antiport activity by supporting proton efflux to control proton extrusion and homeostasis in chloroplasts in a light-dependent manner to modulate photosynthesis. Prevents excessive induction of non-photochemical quenching (NPQ) under continuous-light conditions. Indirectly promotes efficient inorganic carbon uptake into chloroplasts.</text>
</comment>
<comment type="catalytic activity">
    <reaction evidence="1">
        <text>K(+)(in) + H(+)(out) = K(+)(out) + H(+)(in)</text>
        <dbReference type="Rhea" id="RHEA:29467"/>
        <dbReference type="ChEBI" id="CHEBI:15378"/>
        <dbReference type="ChEBI" id="CHEBI:29103"/>
    </reaction>
</comment>
<comment type="subcellular location">
    <subcellularLocation>
        <location evidence="1">Plastid</location>
        <location evidence="1">Chloroplast inner membrane</location>
        <topology evidence="1">Multi-pass membrane protein</topology>
    </subcellularLocation>
</comment>
<comment type="similarity">
    <text evidence="1 2">Belongs to the CemA family.</text>
</comment>
<sequence>MKFKLYWWEVFRWFSDTPSRSSERACEASRQVQHIKKDYVSYKCLVPSLPKHSWQAIILYMNTRLNNFVFIIYWSVLECKTSIYLLNILNKLGLIVSVPGKSFSSPKLLINIRSFFNGNKRLRIMSQSNPYNIWLYPLNILLSFPVHRKPKKLRSTEKIFEKNGFNCENREYPHDKNDKTYFVSGKSSEEELVRIERMNQKLAWIEATLNDLDNWKRYYSLSSFSFEMGDIPEEGQSSLSVEGESDSIVTTIAYESIGLVPRSITRTLSRFKTELTGQSSSLVLYEFRLAKYQALASLQYLGCLILIPWGISFPSERWLLKPWIKNWWNINQFQIFLNYFQEERASKRLQEVEELLWLDEVMLADSSSSEVQSQDLNRQIHDKTIQLVAMYNEDSIQTILHLLTDIIYFAIPSASFISGKKRLAVMNSWIQESFHSLSDTMKAFFILLLTDSCIGFHSPHGWEILISSLSKHLGFAHNKHIISCFVSTFPVISDTVFKYWIFRHLNRISPSIVATYHAMNE</sequence>
<name>CEMA_HUPLU</name>
<feature type="chain" id="PRO_0000216644" description="Potassium/proton antiporter CemA">
    <location>
        <begin position="1"/>
        <end position="521"/>
    </location>
</feature>
<feature type="transmembrane region" description="Helical" evidence="1">
    <location>
        <begin position="68"/>
        <end position="88"/>
    </location>
</feature>
<feature type="transmembrane region" description="Helical" evidence="1">
    <location>
        <begin position="294"/>
        <end position="314"/>
    </location>
</feature>
<feature type="transmembrane region" description="Helical" evidence="1">
    <location>
        <begin position="399"/>
        <end position="419"/>
    </location>
</feature>
<feature type="transmembrane region" description="Helical" evidence="1">
    <location>
        <begin position="446"/>
        <end position="466"/>
    </location>
</feature>
<feature type="transmembrane region" description="Helical" evidence="1">
    <location>
        <begin position="481"/>
        <end position="501"/>
    </location>
</feature>
<proteinExistence type="inferred from homology"/>
<gene>
    <name evidence="1" type="primary">cemA</name>
</gene>